<organism>
    <name type="scientific">Methanococcus vannielii (strain ATCC 35089 / DSM 1224 / JCM 13029 / OCM 148 / SB)</name>
    <dbReference type="NCBI Taxonomy" id="406327"/>
    <lineage>
        <taxon>Archaea</taxon>
        <taxon>Methanobacteriati</taxon>
        <taxon>Methanobacteriota</taxon>
        <taxon>Methanomada group</taxon>
        <taxon>Methanococci</taxon>
        <taxon>Methanococcales</taxon>
        <taxon>Methanococcaceae</taxon>
        <taxon>Methanococcus</taxon>
    </lineage>
</organism>
<comment type="function">
    <text evidence="1">Component of the proteasome core, a large protease complex with broad specificity involved in protein degradation.</text>
</comment>
<comment type="catalytic activity">
    <reaction evidence="1">
        <text>Cleavage of peptide bonds with very broad specificity.</text>
        <dbReference type="EC" id="3.4.25.1"/>
    </reaction>
</comment>
<comment type="activity regulation">
    <text evidence="1">The formation of the proteasomal ATPase PAN-20S proteasome complex, via the docking of the C-termini of PAN into the intersubunit pockets in the alpha-rings, triggers opening of the gate for substrate entry. Interconversion between the open-gate and close-gate conformations leads to a dynamic regulation of the 20S proteasome proteolysis activity.</text>
</comment>
<comment type="subunit">
    <text evidence="1">The 20S proteasome core is composed of 14 alpha and 14 beta subunits that assemble into four stacked heptameric rings, resulting in a barrel-shaped structure. The two inner rings, each composed of seven catalytic beta subunits, are sandwiched by two outer rings, each composed of seven alpha subunits. The catalytic chamber with the active sites is on the inside of the barrel. Has a gated structure, the ends of the cylinder being occluded by the N-termini of the alpha-subunits. Is capped at one or both ends by the proteasome regulatory ATPase, PAN.</text>
</comment>
<comment type="subcellular location">
    <subcellularLocation>
        <location evidence="1">Cytoplasm</location>
    </subcellularLocation>
</comment>
<comment type="similarity">
    <text evidence="1">Belongs to the peptidase T1B family.</text>
</comment>
<sequence>MISGSEYHKEYMKGTTTVGLICEDGVVLATDKRATMGNLIADKEAKKLYKIDDYIAMTIAGSVGDAQSLIRLLSAEAKIYKMRTGNNMTPLSCTTLTSNVLHGNRHYPLLTQLIIGGYDLINGPKLFSLDPVGGINEESSFTATGSGSPTAYGVLEAEYKSEINIEKGLLIAVKALISAMQRDAYSGNGISLAKIDKTGVTLYSDEEIENLVKKVTKKK</sequence>
<feature type="propeptide" id="PRO_0000397354" description="Removed in mature form; by autocatalysis" evidence="1">
    <location>
        <begin position="1"/>
        <end position="14"/>
    </location>
</feature>
<feature type="chain" id="PRO_0000397355" description="Proteasome subunit beta">
    <location>
        <begin position="15"/>
        <end position="219"/>
    </location>
</feature>
<feature type="active site" description="Nucleophile" evidence="1">
    <location>
        <position position="15"/>
    </location>
</feature>
<gene>
    <name evidence="1" type="primary">psmB</name>
    <name type="ordered locus">Mevan_1573</name>
</gene>
<name>PSB_METVS</name>
<accession>A6USJ3</accession>
<reference key="1">
    <citation type="submission" date="2007-06" db="EMBL/GenBank/DDBJ databases">
        <title>Complete sequence of Methanococcus vannielii SB.</title>
        <authorList>
            <consortium name="US DOE Joint Genome Institute"/>
            <person name="Copeland A."/>
            <person name="Lucas S."/>
            <person name="Lapidus A."/>
            <person name="Barry K."/>
            <person name="Glavina del Rio T."/>
            <person name="Dalin E."/>
            <person name="Tice H."/>
            <person name="Pitluck S."/>
            <person name="Chain P."/>
            <person name="Malfatti S."/>
            <person name="Shin M."/>
            <person name="Vergez L."/>
            <person name="Schmutz J."/>
            <person name="Larimer F."/>
            <person name="Land M."/>
            <person name="Hauser L."/>
            <person name="Kyrpides N."/>
            <person name="Anderson I."/>
            <person name="Sieprawska-Lupa M."/>
            <person name="Whitman W.B."/>
            <person name="Richardson P."/>
        </authorList>
    </citation>
    <scope>NUCLEOTIDE SEQUENCE [LARGE SCALE GENOMIC DNA]</scope>
    <source>
        <strain>ATCC 35089 / DSM 1224 / JCM 13029 / OCM 148 / SB</strain>
    </source>
</reference>
<keyword id="KW-0068">Autocatalytic cleavage</keyword>
<keyword id="KW-0963">Cytoplasm</keyword>
<keyword id="KW-0378">Hydrolase</keyword>
<keyword id="KW-0645">Protease</keyword>
<keyword id="KW-0647">Proteasome</keyword>
<keyword id="KW-0888">Threonine protease</keyword>
<keyword id="KW-0865">Zymogen</keyword>
<protein>
    <recommendedName>
        <fullName evidence="1">Proteasome subunit beta</fullName>
        <ecNumber evidence="1">3.4.25.1</ecNumber>
    </recommendedName>
    <alternativeName>
        <fullName evidence="1">20S proteasome beta subunit</fullName>
    </alternativeName>
    <alternativeName>
        <fullName evidence="1">Proteasome core protein PsmB</fullName>
    </alternativeName>
</protein>
<dbReference type="EC" id="3.4.25.1" evidence="1"/>
<dbReference type="EMBL" id="CP000742">
    <property type="protein sequence ID" value="ABR55465.1"/>
    <property type="molecule type" value="Genomic_DNA"/>
</dbReference>
<dbReference type="RefSeq" id="WP_012066379.1">
    <property type="nucleotide sequence ID" value="NC_009634.1"/>
</dbReference>
<dbReference type="SMR" id="A6USJ3"/>
<dbReference type="STRING" id="406327.Mevan_1573"/>
<dbReference type="MEROPS" id="T01.002"/>
<dbReference type="GeneID" id="5325540"/>
<dbReference type="KEGG" id="mvn:Mevan_1573"/>
<dbReference type="eggNOG" id="arCOG00970">
    <property type="taxonomic scope" value="Archaea"/>
</dbReference>
<dbReference type="HOGENOM" id="CLU_035750_7_2_2"/>
<dbReference type="OrthoDB" id="6330at2157"/>
<dbReference type="Proteomes" id="UP000001107">
    <property type="component" value="Chromosome"/>
</dbReference>
<dbReference type="GO" id="GO:0005737">
    <property type="term" value="C:cytoplasm"/>
    <property type="evidence" value="ECO:0007669"/>
    <property type="project" value="UniProtKB-SubCell"/>
</dbReference>
<dbReference type="GO" id="GO:0019774">
    <property type="term" value="C:proteasome core complex, beta-subunit complex"/>
    <property type="evidence" value="ECO:0007669"/>
    <property type="project" value="UniProtKB-UniRule"/>
</dbReference>
<dbReference type="GO" id="GO:0004298">
    <property type="term" value="F:threonine-type endopeptidase activity"/>
    <property type="evidence" value="ECO:0007669"/>
    <property type="project" value="UniProtKB-UniRule"/>
</dbReference>
<dbReference type="GO" id="GO:0010498">
    <property type="term" value="P:proteasomal protein catabolic process"/>
    <property type="evidence" value="ECO:0007669"/>
    <property type="project" value="UniProtKB-UniRule"/>
</dbReference>
<dbReference type="FunFam" id="3.60.20.10:FF:000049">
    <property type="entry name" value="Proteasome subunit beta"/>
    <property type="match status" value="1"/>
</dbReference>
<dbReference type="Gene3D" id="3.60.20.10">
    <property type="entry name" value="Glutamine Phosphoribosylpyrophosphate, subunit 1, domain 1"/>
    <property type="match status" value="1"/>
</dbReference>
<dbReference type="HAMAP" id="MF_02113_A">
    <property type="entry name" value="Proteasome_B_A"/>
    <property type="match status" value="1"/>
</dbReference>
<dbReference type="InterPro" id="IPR029055">
    <property type="entry name" value="Ntn_hydrolases_N"/>
</dbReference>
<dbReference type="InterPro" id="IPR019983">
    <property type="entry name" value="Pept_T1A_Psome_bsu_arc"/>
</dbReference>
<dbReference type="InterPro" id="IPR000243">
    <property type="entry name" value="Pept_T1A_subB"/>
</dbReference>
<dbReference type="InterPro" id="IPR016050">
    <property type="entry name" value="Proteasome_bsu_CS"/>
</dbReference>
<dbReference type="InterPro" id="IPR001353">
    <property type="entry name" value="Proteasome_sua/b"/>
</dbReference>
<dbReference type="InterPro" id="IPR023333">
    <property type="entry name" value="Proteasome_suB-type"/>
</dbReference>
<dbReference type="NCBIfam" id="TIGR03634">
    <property type="entry name" value="arc_protsome_B"/>
    <property type="match status" value="1"/>
</dbReference>
<dbReference type="PANTHER" id="PTHR32194:SF0">
    <property type="entry name" value="ATP-DEPENDENT PROTEASE SUBUNIT HSLV"/>
    <property type="match status" value="1"/>
</dbReference>
<dbReference type="PANTHER" id="PTHR32194">
    <property type="entry name" value="METALLOPROTEASE TLDD"/>
    <property type="match status" value="1"/>
</dbReference>
<dbReference type="Pfam" id="PF00227">
    <property type="entry name" value="Proteasome"/>
    <property type="match status" value="1"/>
</dbReference>
<dbReference type="PRINTS" id="PR00141">
    <property type="entry name" value="PROTEASOME"/>
</dbReference>
<dbReference type="SUPFAM" id="SSF56235">
    <property type="entry name" value="N-terminal nucleophile aminohydrolases (Ntn hydrolases)"/>
    <property type="match status" value="1"/>
</dbReference>
<dbReference type="PROSITE" id="PS00854">
    <property type="entry name" value="PROTEASOME_BETA_1"/>
    <property type="match status" value="1"/>
</dbReference>
<dbReference type="PROSITE" id="PS51476">
    <property type="entry name" value="PROTEASOME_BETA_2"/>
    <property type="match status" value="1"/>
</dbReference>
<evidence type="ECO:0000255" key="1">
    <source>
        <dbReference type="HAMAP-Rule" id="MF_02113"/>
    </source>
</evidence>
<proteinExistence type="inferred from homology"/>